<reference key="1">
    <citation type="journal article" date="2001" name="Nature">
        <title>Complete genome sequence of Salmonella enterica serovar Typhimurium LT2.</title>
        <authorList>
            <person name="McClelland M."/>
            <person name="Sanderson K.E."/>
            <person name="Spieth J."/>
            <person name="Clifton S.W."/>
            <person name="Latreille P."/>
            <person name="Courtney L."/>
            <person name="Porwollik S."/>
            <person name="Ali J."/>
            <person name="Dante M."/>
            <person name="Du F."/>
            <person name="Hou S."/>
            <person name="Layman D."/>
            <person name="Leonard S."/>
            <person name="Nguyen C."/>
            <person name="Scott K."/>
            <person name="Holmes A."/>
            <person name="Grewal N."/>
            <person name="Mulvaney E."/>
            <person name="Ryan E."/>
            <person name="Sun H."/>
            <person name="Florea L."/>
            <person name="Miller W."/>
            <person name="Stoneking T."/>
            <person name="Nhan M."/>
            <person name="Waterston R."/>
            <person name="Wilson R.K."/>
        </authorList>
    </citation>
    <scope>NUCLEOTIDE SEQUENCE [LARGE SCALE GENOMIC DNA]</scope>
    <source>
        <strain>LT2 / SGSC1412 / ATCC 700720</strain>
    </source>
</reference>
<reference key="2">
    <citation type="journal article" date="2009" name="Biochemistry">
        <title>Computation-facilitated assignment of the function in the enolase superfamily: a regiochemically distinct galactarate dehydratase from Oceanobacillus iheyensis.</title>
        <authorList>
            <person name="Rakus J.F."/>
            <person name="Kalyanaraman C."/>
            <person name="Fedorov A.A."/>
            <person name="Fedorov E.V."/>
            <person name="Mills-Groninger F.P."/>
            <person name="Toro R."/>
            <person name="Bonanno J."/>
            <person name="Bain K."/>
            <person name="Sauder J.M."/>
            <person name="Burley S.K."/>
            <person name="Almo S.C."/>
            <person name="Jacobson M.P."/>
            <person name="Gerlt J.A."/>
        </authorList>
    </citation>
    <scope>REGIOCHEMISTRY OF THE REACTION</scope>
    <source>
        <strain>LT2 / SGSC1412 / ATCC 700720</strain>
    </source>
</reference>
<reference key="3">
    <citation type="journal article" date="2018" name="Anal. Biochem.">
        <title>A continuous assay for L-talarate/galactarate dehydratase using circular dichroism.</title>
        <authorList>
            <person name="Easton N.M."/>
            <person name="Aboushawareb S.A.E."/>
            <person name="Bearne S.L."/>
        </authorList>
    </citation>
    <scope>FUNCTION</scope>
    <scope>CATALYTIC ACTIVITY</scope>
    <scope>ACTIVITY REGULATION</scope>
    <scope>BIOPHYSICOCHEMICAL PROPERTIES</scope>
</reference>
<reference evidence="8 9 10" key="4">
    <citation type="journal article" date="2007" name="Biochemistry">
        <title>Evolution of enzymatic activities in the enolase superfamily: L-talarate/galactarate dehydratase from Salmonella typhimurium LT2.</title>
        <authorList>
            <person name="Yew W.S."/>
            <person name="Fedorov A.A."/>
            <person name="Fedorov E.V."/>
            <person name="Almo S.C."/>
            <person name="Gerlt J.A."/>
        </authorList>
    </citation>
    <scope>X-RAY CRYSTALLOGRAPHY (2.20 ANGSTROMS) OF WILD-TYPE AND MUTANT ALA-197 IN COMPLEXES WITH AN ANALOG OF THE ENOLATE INTERMEDIATE; L-GLUCARATE AND MAGNESIUM</scope>
    <scope>FUNCTION</scope>
    <scope>CATALYTIC ACTIVITY</scope>
    <scope>KINETIC PARAMETERS</scope>
    <scope>SUBSTRATE SPECIFICITY</scope>
    <scope>COFACTOR</scope>
    <scope>DISRUPTION PHENOTYPE</scope>
    <scope>SUBUNIT</scope>
    <scope>REACTION MECHANISM</scope>
    <scope>ACTIVE SITES</scope>
    <scope>MUTAGENESIS OF LYS-197 AND HIS-328</scope>
    <source>
        <strain>LT2 / SGSC1412 / ATCC 700720</strain>
    </source>
</reference>
<sequence length="398" mass="44027">MALSANSDAVTYAKAANTRTAAETGDRIEWVKLSLAFLPLATPVSDAKVLTGRQKPLTEVAIIIAEIRSRDGFEGVGFSYSKRAGGQGIYAHAKEIADNLLGEDPNDIDKIYTKLLWAGASVGRSGMAVQAISPIDIALWDMKAKRAGLPLAKLLGAHRDSVQCYNTSGGFLHTPLDQVLKNVVISRENGIGGIKLKVGQPNCAEDIRRLTAVREALGDEFPLMVDANQQWDRETAIRMGRKMEQFNLIWIEEPLDAYDIEGHAQLAAALDTPIATGEMLTSFREHEQLILGNASDFVQPDAPRVGGISPFLKIMDLAAKHGRKLAPHFAMEVHLHLSAAYPLEPWLEHFEWLNPLFNEQLELRDGRMWISDRHGLGFTLSEQARRWTQLTCEFGKRP</sequence>
<protein>
    <recommendedName>
        <fullName evidence="3">L-talarate/galactarate dehydratase</fullName>
        <shortName evidence="3">TalrD/GalrD</shortName>
        <ecNumber evidence="1">4.2.1.156</ecNumber>
        <ecNumber evidence="1 2">4.2.1.42</ecNumber>
    </recommendedName>
    <alternativeName>
        <fullName evidence="4">StTGD</fullName>
    </alternativeName>
</protein>
<gene>
    <name type="ordered locus">STM3697</name>
</gene>
<accession>Q8ZL58</accession>
<evidence type="ECO:0000269" key="1">
    <source>
    </source>
</evidence>
<evidence type="ECO:0000269" key="2">
    <source>
    </source>
</evidence>
<evidence type="ECO:0000303" key="3">
    <source>
    </source>
</evidence>
<evidence type="ECO:0000303" key="4">
    <source>
    </source>
</evidence>
<evidence type="ECO:0000305" key="5"/>
<evidence type="ECO:0000305" key="6">
    <source>
    </source>
</evidence>
<evidence type="ECO:0000305" key="7">
    <source>
    </source>
</evidence>
<evidence type="ECO:0007744" key="8">
    <source>
        <dbReference type="PDB" id="2PP0"/>
    </source>
</evidence>
<evidence type="ECO:0007744" key="9">
    <source>
        <dbReference type="PDB" id="2PP1"/>
    </source>
</evidence>
<evidence type="ECO:0007744" key="10">
    <source>
        <dbReference type="PDB" id="2PP3"/>
    </source>
</evidence>
<evidence type="ECO:0007829" key="11">
    <source>
        <dbReference type="PDB" id="2PP0"/>
    </source>
</evidence>
<organism>
    <name type="scientific">Salmonella typhimurium (strain LT2 / SGSC1412 / ATCC 700720)</name>
    <dbReference type="NCBI Taxonomy" id="99287"/>
    <lineage>
        <taxon>Bacteria</taxon>
        <taxon>Pseudomonadati</taxon>
        <taxon>Pseudomonadota</taxon>
        <taxon>Gammaproteobacteria</taxon>
        <taxon>Enterobacterales</taxon>
        <taxon>Enterobacteriaceae</taxon>
        <taxon>Salmonella</taxon>
    </lineage>
</organism>
<comment type="function">
    <text evidence="1 2">Catalyzes the efficient dehydration of both L-talarate (also called L-altrarate) and galactarate to 5-keto-4-deoxy-D-glucarate (5-KDG) (PubMed:17649980, PubMed:29248502). Also catalyzes the epimerization of L-talarate to galactarate; epimerization occurs in competition with dehydration. Is required for the utilization of L-talarate as a carbon source. Also functions in galactarate utilization. Is not active on other acid sugars (PubMed:17649980).</text>
</comment>
<comment type="catalytic activity">
    <reaction evidence="1">
        <text>L-altrarate = 5-dehydro-4-deoxy-D-glucarate + H2O</text>
        <dbReference type="Rhea" id="RHEA:44028"/>
        <dbReference type="ChEBI" id="CHEBI:15377"/>
        <dbReference type="ChEBI" id="CHEBI:37547"/>
        <dbReference type="ChEBI" id="CHEBI:42819"/>
        <dbReference type="EC" id="4.2.1.156"/>
    </reaction>
    <physiologicalReaction direction="left-to-right" evidence="1">
        <dbReference type="Rhea" id="RHEA:44029"/>
    </physiologicalReaction>
</comment>
<comment type="catalytic activity">
    <reaction evidence="1 2">
        <text>galactarate = 5-dehydro-4-deoxy-D-glucarate + H2O</text>
        <dbReference type="Rhea" id="RHEA:16005"/>
        <dbReference type="ChEBI" id="CHEBI:15377"/>
        <dbReference type="ChEBI" id="CHEBI:16537"/>
        <dbReference type="ChEBI" id="CHEBI:42819"/>
        <dbReference type="EC" id="4.2.1.42"/>
    </reaction>
    <physiologicalReaction direction="left-to-right" evidence="1 2">
        <dbReference type="Rhea" id="RHEA:16006"/>
    </physiologicalReaction>
</comment>
<comment type="catalytic activity">
    <reaction evidence="1">
        <text>L-altrarate = galactarate</text>
        <dbReference type="Rhea" id="RHEA:64172"/>
        <dbReference type="ChEBI" id="CHEBI:16537"/>
        <dbReference type="ChEBI" id="CHEBI:37547"/>
    </reaction>
</comment>
<comment type="cofactor">
    <cofactor evidence="1">
        <name>Mg(2+)</name>
        <dbReference type="ChEBI" id="CHEBI:18420"/>
    </cofactor>
    <text evidence="1">Binds 1 Mg(2+) ion per subunit.</text>
</comment>
<comment type="activity regulation">
    <text evidence="2">Competitively inhibited by tartronate.</text>
</comment>
<comment type="biophysicochemical properties">
    <kinetics>
        <KM evidence="1">230 uM for L-talarate</KM>
        <KM evidence="1">330 uM for galactarate</KM>
        <KM evidence="2">380 uM for galactarate</KM>
        <text evidence="1 2">kcat is 2.1 sec(-1) with L-talarate as substrate (PubMed:17649980). kcat is 3.6 sec(-1) with galactarate as substrate (PubMed:17649980). kcat is 4.8 sec(-1) with galactarate as substrate (PubMed:29248502).</text>
    </kinetics>
</comment>
<comment type="subunit">
    <text evidence="6">Homooctamer; tetramer of dimers.</text>
</comment>
<comment type="disruption phenotype">
    <text evidence="1">Cells lacking this gene lose the ability to grow on L-talarate as carbon source, and are impaired in the ability to utilize galactarate as carbon source.</text>
</comment>
<comment type="miscellaneous">
    <text evidence="7">The enzyme product is the enantiomer of the product obtained in the galactarate dehydratase reaction catalyzed by OB2843; the enzymes thus differ in their regiochemistry of dehydration.</text>
</comment>
<comment type="similarity">
    <text evidence="5">Belongs to the mandelate racemase/muconate lactonizing enzyme family.</text>
</comment>
<feature type="chain" id="PRO_0000429330" description="L-talarate/galactarate dehydratase">
    <location>
        <begin position="1"/>
        <end position="398"/>
    </location>
</feature>
<feature type="active site" description="Proton acceptor" evidence="1">
    <location>
        <position position="197"/>
    </location>
</feature>
<feature type="active site" description="Proton donor/acceptor" evidence="1">
    <location>
        <position position="328"/>
    </location>
</feature>
<feature type="binding site" evidence="1">
    <location>
        <begin position="46"/>
        <end position="48"/>
    </location>
    <ligand>
        <name>substrate</name>
    </ligand>
</feature>
<feature type="binding site" evidence="1">
    <location>
        <begin position="82"/>
        <end position="83"/>
    </location>
    <ligand>
        <name>substrate</name>
    </ligand>
</feature>
<feature type="binding site" evidence="1">
    <location>
        <position position="195"/>
    </location>
    <ligand>
        <name>substrate</name>
    </ligand>
</feature>
<feature type="binding site" evidence="1">
    <location>
        <position position="226"/>
    </location>
    <ligand>
        <name>Mg(2+)</name>
        <dbReference type="ChEBI" id="CHEBI:18420"/>
    </ligand>
</feature>
<feature type="binding site" evidence="1">
    <location>
        <position position="228"/>
    </location>
    <ligand>
        <name>substrate</name>
    </ligand>
</feature>
<feature type="binding site" evidence="1">
    <location>
        <position position="252"/>
    </location>
    <ligand>
        <name>Mg(2+)</name>
        <dbReference type="ChEBI" id="CHEBI:18420"/>
    </ligand>
</feature>
<feature type="binding site" evidence="1">
    <location>
        <position position="278"/>
    </location>
    <ligand>
        <name>Mg(2+)</name>
        <dbReference type="ChEBI" id="CHEBI:18420"/>
    </ligand>
</feature>
<feature type="binding site" evidence="1">
    <location>
        <position position="348"/>
    </location>
    <ligand>
        <name>substrate</name>
    </ligand>
</feature>
<feature type="site" description="Increases basicity of active site His">
    <location>
        <position position="301"/>
    </location>
</feature>
<feature type="mutagenesis site" description="Loss of dehydration activity on both L-talarate and galactarate and loss of epimerization activity." evidence="1">
    <original>K</original>
    <variation>A</variation>
    <location>
        <position position="197"/>
    </location>
</feature>
<feature type="mutagenesis site" description="Loss of dehydration activity on both L-talarate and galactarate and loss of epimerization activity." evidence="1">
    <original>H</original>
    <variation>N</variation>
    <variation>A</variation>
    <location>
        <position position="328"/>
    </location>
</feature>
<feature type="helix" evidence="11">
    <location>
        <begin position="21"/>
        <end position="24"/>
    </location>
</feature>
<feature type="strand" evidence="11">
    <location>
        <begin position="28"/>
        <end position="44"/>
    </location>
</feature>
<feature type="helix" evidence="11">
    <location>
        <begin position="47"/>
        <end position="50"/>
    </location>
</feature>
<feature type="strand" evidence="11">
    <location>
        <begin position="57"/>
        <end position="69"/>
    </location>
</feature>
<feature type="strand" evidence="11">
    <location>
        <begin position="74"/>
        <end position="83"/>
    </location>
</feature>
<feature type="helix" evidence="11">
    <location>
        <begin position="86"/>
        <end position="96"/>
    </location>
</feature>
<feature type="helix" evidence="11">
    <location>
        <begin position="97"/>
        <end position="100"/>
    </location>
</feature>
<feature type="helix" evidence="11">
    <location>
        <begin position="108"/>
        <end position="118"/>
    </location>
</feature>
<feature type="helix" evidence="11">
    <location>
        <begin position="120"/>
        <end position="122"/>
    </location>
</feature>
<feature type="helix" evidence="11">
    <location>
        <begin position="127"/>
        <end position="146"/>
    </location>
</feature>
<feature type="helix" evidence="11">
    <location>
        <begin position="151"/>
        <end position="155"/>
    </location>
</feature>
<feature type="strand" evidence="11">
    <location>
        <begin position="160"/>
        <end position="166"/>
    </location>
</feature>
<feature type="helix" evidence="11">
    <location>
        <begin position="176"/>
        <end position="188"/>
    </location>
</feature>
<feature type="strand" evidence="11">
    <location>
        <begin position="194"/>
        <end position="197"/>
    </location>
</feature>
<feature type="helix" evidence="11">
    <location>
        <begin position="203"/>
        <end position="217"/>
    </location>
</feature>
<feature type="strand" evidence="11">
    <location>
        <begin position="219"/>
        <end position="221"/>
    </location>
</feature>
<feature type="strand" evidence="11">
    <location>
        <begin position="223"/>
        <end position="226"/>
    </location>
</feature>
<feature type="helix" evidence="11">
    <location>
        <begin position="233"/>
        <end position="243"/>
    </location>
</feature>
<feature type="helix" evidence="11">
    <location>
        <begin position="244"/>
        <end position="246"/>
    </location>
</feature>
<feature type="helix" evidence="11">
    <location>
        <begin position="260"/>
        <end position="269"/>
    </location>
</feature>
<feature type="strand" evidence="11">
    <location>
        <begin position="274"/>
        <end position="276"/>
    </location>
</feature>
<feature type="helix" evidence="11">
    <location>
        <begin position="283"/>
        <end position="291"/>
    </location>
</feature>
<feature type="strand" evidence="11">
    <location>
        <begin position="296"/>
        <end position="298"/>
    </location>
</feature>
<feature type="helix" evidence="11">
    <location>
        <begin position="302"/>
        <end position="305"/>
    </location>
</feature>
<feature type="helix" evidence="11">
    <location>
        <begin position="308"/>
        <end position="320"/>
    </location>
</feature>
<feature type="helix" evidence="11">
    <location>
        <begin position="331"/>
        <end position="339"/>
    </location>
</feature>
<feature type="strand" evidence="11">
    <location>
        <begin position="347"/>
        <end position="349"/>
    </location>
</feature>
<feature type="helix" evidence="11">
    <location>
        <begin position="354"/>
        <end position="356"/>
    </location>
</feature>
<feature type="strand" evidence="11">
    <location>
        <begin position="362"/>
        <end position="364"/>
    </location>
</feature>
<feature type="strand" evidence="11">
    <location>
        <begin position="367"/>
        <end position="369"/>
    </location>
</feature>
<feature type="strand" evidence="11">
    <location>
        <begin position="372"/>
        <end position="375"/>
    </location>
</feature>
<feature type="helix" evidence="11">
    <location>
        <begin position="382"/>
        <end position="386"/>
    </location>
</feature>
<feature type="strand" evidence="11">
    <location>
        <begin position="388"/>
        <end position="395"/>
    </location>
</feature>
<proteinExistence type="evidence at protein level"/>
<dbReference type="EC" id="4.2.1.156" evidence="1"/>
<dbReference type="EC" id="4.2.1.42" evidence="1 2"/>
<dbReference type="EMBL" id="AE006468">
    <property type="protein sequence ID" value="AAL22556.1"/>
    <property type="molecule type" value="Genomic_DNA"/>
</dbReference>
<dbReference type="RefSeq" id="NP_462597.1">
    <property type="nucleotide sequence ID" value="NC_003197.2"/>
</dbReference>
<dbReference type="RefSeq" id="WP_001218249.1">
    <property type="nucleotide sequence ID" value="NC_003197.2"/>
</dbReference>
<dbReference type="PDB" id="2PP0">
    <property type="method" value="X-ray"/>
    <property type="resolution" value="2.20 A"/>
    <property type="chains" value="A/B/C=1-398"/>
</dbReference>
<dbReference type="PDB" id="2PP1">
    <property type="method" value="X-ray"/>
    <property type="resolution" value="2.20 A"/>
    <property type="chains" value="A/B/C/D/E/F=1-398"/>
</dbReference>
<dbReference type="PDB" id="2PP3">
    <property type="method" value="X-ray"/>
    <property type="resolution" value="2.20 A"/>
    <property type="chains" value="A/B/C=1-398"/>
</dbReference>
<dbReference type="PDBsum" id="2PP0"/>
<dbReference type="PDBsum" id="2PP1"/>
<dbReference type="PDBsum" id="2PP3"/>
<dbReference type="SMR" id="Q8ZL58"/>
<dbReference type="STRING" id="99287.STM3697"/>
<dbReference type="PaxDb" id="99287-STM3697"/>
<dbReference type="GeneID" id="1255221"/>
<dbReference type="KEGG" id="stm:STM3697"/>
<dbReference type="PATRIC" id="fig|99287.12.peg.3910"/>
<dbReference type="HOGENOM" id="CLU_030273_3_1_6"/>
<dbReference type="OMA" id="WVEHFDW"/>
<dbReference type="PhylomeDB" id="Q8ZL58"/>
<dbReference type="BioCyc" id="SENT99287:STM3697-MONOMER"/>
<dbReference type="BRENDA" id="4.2.1.156">
    <property type="organism ID" value="5542"/>
</dbReference>
<dbReference type="BRENDA" id="4.2.1.42">
    <property type="organism ID" value="5542"/>
</dbReference>
<dbReference type="EvolutionaryTrace" id="Q8ZL58"/>
<dbReference type="Proteomes" id="UP000001014">
    <property type="component" value="Chromosome"/>
</dbReference>
<dbReference type="GO" id="GO:0008867">
    <property type="term" value="F:galactarate dehydratase activity"/>
    <property type="evidence" value="ECO:0000314"/>
    <property type="project" value="CACAO"/>
</dbReference>
<dbReference type="GO" id="GO:0016836">
    <property type="term" value="F:hydro-lyase activity"/>
    <property type="evidence" value="ECO:0000318"/>
    <property type="project" value="GO_Central"/>
</dbReference>
<dbReference type="GO" id="GO:1990594">
    <property type="term" value="F:L-altrarate dehydratase activity"/>
    <property type="evidence" value="ECO:0000314"/>
    <property type="project" value="CACAO"/>
</dbReference>
<dbReference type="GO" id="GO:0000287">
    <property type="term" value="F:magnesium ion binding"/>
    <property type="evidence" value="ECO:0000318"/>
    <property type="project" value="GO_Central"/>
</dbReference>
<dbReference type="GO" id="GO:0009063">
    <property type="term" value="P:amino acid catabolic process"/>
    <property type="evidence" value="ECO:0007669"/>
    <property type="project" value="InterPro"/>
</dbReference>
<dbReference type="GO" id="GO:0016052">
    <property type="term" value="P:carbohydrate catabolic process"/>
    <property type="evidence" value="ECO:0000318"/>
    <property type="project" value="GO_Central"/>
</dbReference>
<dbReference type="GO" id="GO:0046392">
    <property type="term" value="P:galactarate catabolic process"/>
    <property type="evidence" value="ECO:0000315"/>
    <property type="project" value="CACAO"/>
</dbReference>
<dbReference type="GO" id="GO:1903663">
    <property type="term" value="P:L-altrarate catabolic process"/>
    <property type="evidence" value="ECO:0000315"/>
    <property type="project" value="CACAO"/>
</dbReference>
<dbReference type="CDD" id="cd03316">
    <property type="entry name" value="MR_like"/>
    <property type="match status" value="1"/>
</dbReference>
<dbReference type="FunFam" id="3.20.20.120:FF:000009">
    <property type="entry name" value="L-talarate/galactarate dehydratase"/>
    <property type="match status" value="1"/>
</dbReference>
<dbReference type="FunFam" id="3.30.390.10:FF:000008">
    <property type="entry name" value="L-talarate/galactarate dehydratase"/>
    <property type="match status" value="1"/>
</dbReference>
<dbReference type="Gene3D" id="3.20.20.120">
    <property type="entry name" value="Enolase-like C-terminal domain"/>
    <property type="match status" value="1"/>
</dbReference>
<dbReference type="Gene3D" id="3.30.390.10">
    <property type="entry name" value="Enolase-like, N-terminal domain"/>
    <property type="match status" value="1"/>
</dbReference>
<dbReference type="InterPro" id="IPR036849">
    <property type="entry name" value="Enolase-like_C_sf"/>
</dbReference>
<dbReference type="InterPro" id="IPR029017">
    <property type="entry name" value="Enolase-like_N"/>
</dbReference>
<dbReference type="InterPro" id="IPR029065">
    <property type="entry name" value="Enolase_C-like"/>
</dbReference>
<dbReference type="InterPro" id="IPR033978">
    <property type="entry name" value="L-talarate_dehydratase"/>
</dbReference>
<dbReference type="InterPro" id="IPR018110">
    <property type="entry name" value="Mandel_Rmase/mucon_lact_enz_CS"/>
</dbReference>
<dbReference type="InterPro" id="IPR013342">
    <property type="entry name" value="Mandelate_racemase_C"/>
</dbReference>
<dbReference type="InterPro" id="IPR013341">
    <property type="entry name" value="Mandelate_racemase_N_dom"/>
</dbReference>
<dbReference type="InterPro" id="IPR046945">
    <property type="entry name" value="RHMD-like"/>
</dbReference>
<dbReference type="NCBIfam" id="NF047820">
    <property type="entry name" value="TalGalacDh"/>
    <property type="match status" value="1"/>
</dbReference>
<dbReference type="PANTHER" id="PTHR13794">
    <property type="entry name" value="ENOLASE SUPERFAMILY, MANDELATE RACEMASE"/>
    <property type="match status" value="1"/>
</dbReference>
<dbReference type="PANTHER" id="PTHR13794:SF58">
    <property type="entry name" value="MITOCHONDRIAL ENOLASE SUPERFAMILY MEMBER 1"/>
    <property type="match status" value="1"/>
</dbReference>
<dbReference type="Pfam" id="PF13378">
    <property type="entry name" value="MR_MLE_C"/>
    <property type="match status" value="1"/>
</dbReference>
<dbReference type="Pfam" id="PF02746">
    <property type="entry name" value="MR_MLE_N"/>
    <property type="match status" value="1"/>
</dbReference>
<dbReference type="SFLD" id="SFLDS00001">
    <property type="entry name" value="Enolase"/>
    <property type="match status" value="1"/>
</dbReference>
<dbReference type="SFLD" id="SFLDF00134">
    <property type="entry name" value="L-talarate/galactarate_dehydra"/>
    <property type="match status" value="1"/>
</dbReference>
<dbReference type="SMART" id="SM00922">
    <property type="entry name" value="MR_MLE"/>
    <property type="match status" value="1"/>
</dbReference>
<dbReference type="SUPFAM" id="SSF51604">
    <property type="entry name" value="Enolase C-terminal domain-like"/>
    <property type="match status" value="1"/>
</dbReference>
<dbReference type="SUPFAM" id="SSF54826">
    <property type="entry name" value="Enolase N-terminal domain-like"/>
    <property type="match status" value="1"/>
</dbReference>
<dbReference type="PROSITE" id="PS00909">
    <property type="entry name" value="MR_MLE_2"/>
    <property type="match status" value="1"/>
</dbReference>
<name>TAGAD_SALTY</name>
<keyword id="KW-0002">3D-structure</keyword>
<keyword id="KW-0456">Lyase</keyword>
<keyword id="KW-0460">Magnesium</keyword>
<keyword id="KW-0479">Metal-binding</keyword>
<keyword id="KW-1185">Reference proteome</keyword>